<comment type="function">
    <text evidence="1">Specifically methylates the N4 position of cytidine in position 1402 (C1402) of 16S rRNA.</text>
</comment>
<comment type="catalytic activity">
    <reaction evidence="1">
        <text>cytidine(1402) in 16S rRNA + S-adenosyl-L-methionine = N(4)-methylcytidine(1402) in 16S rRNA + S-adenosyl-L-homocysteine + H(+)</text>
        <dbReference type="Rhea" id="RHEA:42928"/>
        <dbReference type="Rhea" id="RHEA-COMP:10286"/>
        <dbReference type="Rhea" id="RHEA-COMP:10287"/>
        <dbReference type="ChEBI" id="CHEBI:15378"/>
        <dbReference type="ChEBI" id="CHEBI:57856"/>
        <dbReference type="ChEBI" id="CHEBI:59789"/>
        <dbReference type="ChEBI" id="CHEBI:74506"/>
        <dbReference type="ChEBI" id="CHEBI:82748"/>
        <dbReference type="EC" id="2.1.1.199"/>
    </reaction>
</comment>
<comment type="subcellular location">
    <subcellularLocation>
        <location evidence="1">Cytoplasm</location>
    </subcellularLocation>
</comment>
<comment type="similarity">
    <text evidence="1">Belongs to the methyltransferase superfamily. RsmH family.</text>
</comment>
<protein>
    <recommendedName>
        <fullName evidence="1">Ribosomal RNA small subunit methyltransferase H</fullName>
        <ecNumber evidence="1">2.1.1.199</ecNumber>
    </recommendedName>
    <alternativeName>
        <fullName evidence="1">16S rRNA m(4)C1402 methyltransferase</fullName>
    </alternativeName>
    <alternativeName>
        <fullName evidence="1">rRNA (cytosine-N(4)-)-methyltransferase RsmH</fullName>
    </alternativeName>
</protein>
<evidence type="ECO:0000255" key="1">
    <source>
        <dbReference type="HAMAP-Rule" id="MF_01007"/>
    </source>
</evidence>
<keyword id="KW-0963">Cytoplasm</keyword>
<keyword id="KW-0489">Methyltransferase</keyword>
<keyword id="KW-0698">rRNA processing</keyword>
<keyword id="KW-0949">S-adenosyl-L-methionine</keyword>
<keyword id="KW-0808">Transferase</keyword>
<sequence length="316" mass="36058">MTKEFHHVTVLLHETIDMLDVKPDGIYVDATLGGAGHSEYLLSKLSEKGHLYAFDQDQNAIDNAQKRLAPYIEKGMVTFIKDNFRHLQARLRETGVQEIDGICYDLGVSSPQLDQRERGFSYKKDAPLDMRMNQDASLTAYEVVNNYDYHDLVRIFFKYGEDKFSKQIARKIEQAREVKPIETTTELAEIIKLVKPAKELKKKGHPAKQIFQAIRIEVNDELGAADESIQQAMDMLALDGRISVITFHSLEDRLTKQLFKEASTVEVPKGLPFIPDDLKPKMELVSRKPILPSAEELEANNRSHSAKLRVVRKIHK</sequence>
<accession>B8ZL51</accession>
<reference key="1">
    <citation type="journal article" date="2009" name="J. Bacteriol.">
        <title>Role of conjugative elements in the evolution of the multidrug-resistant pandemic clone Streptococcus pneumoniae Spain23F ST81.</title>
        <authorList>
            <person name="Croucher N.J."/>
            <person name="Walker D."/>
            <person name="Romero P."/>
            <person name="Lennard N."/>
            <person name="Paterson G.K."/>
            <person name="Bason N.C."/>
            <person name="Mitchell A.M."/>
            <person name="Quail M.A."/>
            <person name="Andrew P.W."/>
            <person name="Parkhill J."/>
            <person name="Bentley S.D."/>
            <person name="Mitchell T.J."/>
        </authorList>
    </citation>
    <scope>NUCLEOTIDE SEQUENCE [LARGE SCALE GENOMIC DNA]</scope>
    <source>
        <strain>ATCC 700669 / Spain 23F-1</strain>
    </source>
</reference>
<proteinExistence type="inferred from homology"/>
<organism>
    <name type="scientific">Streptococcus pneumoniae (strain ATCC 700669 / Spain 23F-1)</name>
    <dbReference type="NCBI Taxonomy" id="561276"/>
    <lineage>
        <taxon>Bacteria</taxon>
        <taxon>Bacillati</taxon>
        <taxon>Bacillota</taxon>
        <taxon>Bacilli</taxon>
        <taxon>Lactobacillales</taxon>
        <taxon>Streptococcaceae</taxon>
        <taxon>Streptococcus</taxon>
    </lineage>
</organism>
<dbReference type="EC" id="2.1.1.199" evidence="1"/>
<dbReference type="EMBL" id="FM211187">
    <property type="protein sequence ID" value="CAR68164.1"/>
    <property type="molecule type" value="Genomic_DNA"/>
</dbReference>
<dbReference type="RefSeq" id="WP_000159418.1">
    <property type="nucleotide sequence ID" value="NC_011900.1"/>
</dbReference>
<dbReference type="SMR" id="B8ZL51"/>
<dbReference type="KEGG" id="sne:SPN23F03060"/>
<dbReference type="HOGENOM" id="CLU_038422_2_0_9"/>
<dbReference type="GO" id="GO:0005737">
    <property type="term" value="C:cytoplasm"/>
    <property type="evidence" value="ECO:0007669"/>
    <property type="project" value="UniProtKB-SubCell"/>
</dbReference>
<dbReference type="GO" id="GO:0071424">
    <property type="term" value="F:rRNA (cytosine-N4-)-methyltransferase activity"/>
    <property type="evidence" value="ECO:0007669"/>
    <property type="project" value="UniProtKB-UniRule"/>
</dbReference>
<dbReference type="GO" id="GO:0070475">
    <property type="term" value="P:rRNA base methylation"/>
    <property type="evidence" value="ECO:0007669"/>
    <property type="project" value="UniProtKB-UniRule"/>
</dbReference>
<dbReference type="FunFam" id="1.10.150.170:FF:000001">
    <property type="entry name" value="Ribosomal RNA small subunit methyltransferase H"/>
    <property type="match status" value="1"/>
</dbReference>
<dbReference type="Gene3D" id="1.10.150.170">
    <property type="entry name" value="Putative methyltransferase TM0872, insert domain"/>
    <property type="match status" value="1"/>
</dbReference>
<dbReference type="Gene3D" id="3.40.50.150">
    <property type="entry name" value="Vaccinia Virus protein VP39"/>
    <property type="match status" value="1"/>
</dbReference>
<dbReference type="HAMAP" id="MF_01007">
    <property type="entry name" value="16SrRNA_methyltr_H"/>
    <property type="match status" value="1"/>
</dbReference>
<dbReference type="InterPro" id="IPR002903">
    <property type="entry name" value="RsmH"/>
</dbReference>
<dbReference type="InterPro" id="IPR023397">
    <property type="entry name" value="SAM-dep_MeTrfase_MraW_recog"/>
</dbReference>
<dbReference type="InterPro" id="IPR029063">
    <property type="entry name" value="SAM-dependent_MTases_sf"/>
</dbReference>
<dbReference type="NCBIfam" id="TIGR00006">
    <property type="entry name" value="16S rRNA (cytosine(1402)-N(4))-methyltransferase RsmH"/>
    <property type="match status" value="1"/>
</dbReference>
<dbReference type="PANTHER" id="PTHR11265:SF0">
    <property type="entry name" value="12S RRNA N4-METHYLCYTIDINE METHYLTRANSFERASE"/>
    <property type="match status" value="1"/>
</dbReference>
<dbReference type="PANTHER" id="PTHR11265">
    <property type="entry name" value="S-ADENOSYL-METHYLTRANSFERASE MRAW"/>
    <property type="match status" value="1"/>
</dbReference>
<dbReference type="Pfam" id="PF01795">
    <property type="entry name" value="Methyltransf_5"/>
    <property type="match status" value="1"/>
</dbReference>
<dbReference type="PIRSF" id="PIRSF004486">
    <property type="entry name" value="MraW"/>
    <property type="match status" value="1"/>
</dbReference>
<dbReference type="SUPFAM" id="SSF81799">
    <property type="entry name" value="Putative methyltransferase TM0872, insert domain"/>
    <property type="match status" value="1"/>
</dbReference>
<dbReference type="SUPFAM" id="SSF53335">
    <property type="entry name" value="S-adenosyl-L-methionine-dependent methyltransferases"/>
    <property type="match status" value="1"/>
</dbReference>
<gene>
    <name evidence="1" type="primary">rsmH</name>
    <name type="synonym">mraW</name>
    <name type="ordered locus">SPN23F03060</name>
</gene>
<name>RSMH_STRPJ</name>
<feature type="chain" id="PRO_0000387150" description="Ribosomal RNA small subunit methyltransferase H">
    <location>
        <begin position="1"/>
        <end position="316"/>
    </location>
</feature>
<feature type="binding site" evidence="1">
    <location>
        <begin position="35"/>
        <end position="37"/>
    </location>
    <ligand>
        <name>S-adenosyl-L-methionine</name>
        <dbReference type="ChEBI" id="CHEBI:59789"/>
    </ligand>
</feature>
<feature type="binding site" evidence="1">
    <location>
        <position position="55"/>
    </location>
    <ligand>
        <name>S-adenosyl-L-methionine</name>
        <dbReference type="ChEBI" id="CHEBI:59789"/>
    </ligand>
</feature>
<feature type="binding site" evidence="1">
    <location>
        <position position="84"/>
    </location>
    <ligand>
        <name>S-adenosyl-L-methionine</name>
        <dbReference type="ChEBI" id="CHEBI:59789"/>
    </ligand>
</feature>
<feature type="binding site" evidence="1">
    <location>
        <position position="105"/>
    </location>
    <ligand>
        <name>S-adenosyl-L-methionine</name>
        <dbReference type="ChEBI" id="CHEBI:59789"/>
    </ligand>
</feature>
<feature type="binding site" evidence="1">
    <location>
        <position position="112"/>
    </location>
    <ligand>
        <name>S-adenosyl-L-methionine</name>
        <dbReference type="ChEBI" id="CHEBI:59789"/>
    </ligand>
</feature>